<evidence type="ECO:0000255" key="1">
    <source>
        <dbReference type="HAMAP-Rule" id="MF_00033"/>
    </source>
</evidence>
<evidence type="ECO:0000256" key="2">
    <source>
        <dbReference type="SAM" id="MobiDB-lite"/>
    </source>
</evidence>
<dbReference type="EC" id="2.4.1.227" evidence="1"/>
<dbReference type="EMBL" id="AE008923">
    <property type="protein sequence ID" value="AAM35667.1"/>
    <property type="molecule type" value="Genomic_DNA"/>
</dbReference>
<dbReference type="RefSeq" id="WP_011050530.1">
    <property type="nucleotide sequence ID" value="NC_003919.1"/>
</dbReference>
<dbReference type="SMR" id="Q8PPA8"/>
<dbReference type="CAZy" id="GT28">
    <property type="family name" value="Glycosyltransferase Family 28"/>
</dbReference>
<dbReference type="GeneID" id="66909973"/>
<dbReference type="KEGG" id="xac:XAC0779"/>
<dbReference type="eggNOG" id="COG0707">
    <property type="taxonomic scope" value="Bacteria"/>
</dbReference>
<dbReference type="HOGENOM" id="CLU_037404_2_0_6"/>
<dbReference type="UniPathway" id="UPA00219"/>
<dbReference type="Proteomes" id="UP000000576">
    <property type="component" value="Chromosome"/>
</dbReference>
<dbReference type="GO" id="GO:0005886">
    <property type="term" value="C:plasma membrane"/>
    <property type="evidence" value="ECO:0007669"/>
    <property type="project" value="UniProtKB-SubCell"/>
</dbReference>
<dbReference type="GO" id="GO:0051991">
    <property type="term" value="F:UDP-N-acetyl-D-glucosamine:N-acetylmuramoyl-L-alanyl-D-glutamyl-meso-2,6-diaminopimelyl-D-alanyl-D-alanine-diphosphoundecaprenol 4-beta-N-acetylglucosaminlytransferase activity"/>
    <property type="evidence" value="ECO:0007669"/>
    <property type="project" value="RHEA"/>
</dbReference>
<dbReference type="GO" id="GO:0050511">
    <property type="term" value="F:undecaprenyldiphospho-muramoylpentapeptide beta-N-acetylglucosaminyltransferase activity"/>
    <property type="evidence" value="ECO:0007669"/>
    <property type="project" value="UniProtKB-UniRule"/>
</dbReference>
<dbReference type="GO" id="GO:0005975">
    <property type="term" value="P:carbohydrate metabolic process"/>
    <property type="evidence" value="ECO:0007669"/>
    <property type="project" value="InterPro"/>
</dbReference>
<dbReference type="GO" id="GO:0051301">
    <property type="term" value="P:cell division"/>
    <property type="evidence" value="ECO:0007669"/>
    <property type="project" value="UniProtKB-KW"/>
</dbReference>
<dbReference type="GO" id="GO:0071555">
    <property type="term" value="P:cell wall organization"/>
    <property type="evidence" value="ECO:0007669"/>
    <property type="project" value="UniProtKB-KW"/>
</dbReference>
<dbReference type="GO" id="GO:0030259">
    <property type="term" value="P:lipid glycosylation"/>
    <property type="evidence" value="ECO:0007669"/>
    <property type="project" value="UniProtKB-UniRule"/>
</dbReference>
<dbReference type="GO" id="GO:0009252">
    <property type="term" value="P:peptidoglycan biosynthetic process"/>
    <property type="evidence" value="ECO:0007669"/>
    <property type="project" value="UniProtKB-UniRule"/>
</dbReference>
<dbReference type="GO" id="GO:0008360">
    <property type="term" value="P:regulation of cell shape"/>
    <property type="evidence" value="ECO:0007669"/>
    <property type="project" value="UniProtKB-KW"/>
</dbReference>
<dbReference type="CDD" id="cd03785">
    <property type="entry name" value="GT28_MurG"/>
    <property type="match status" value="1"/>
</dbReference>
<dbReference type="Gene3D" id="3.40.50.2000">
    <property type="entry name" value="Glycogen Phosphorylase B"/>
    <property type="match status" value="2"/>
</dbReference>
<dbReference type="HAMAP" id="MF_00033">
    <property type="entry name" value="MurG"/>
    <property type="match status" value="1"/>
</dbReference>
<dbReference type="InterPro" id="IPR006009">
    <property type="entry name" value="GlcNAc_MurG"/>
</dbReference>
<dbReference type="InterPro" id="IPR007235">
    <property type="entry name" value="Glyco_trans_28_C"/>
</dbReference>
<dbReference type="InterPro" id="IPR004276">
    <property type="entry name" value="GlycoTrans_28_N"/>
</dbReference>
<dbReference type="NCBIfam" id="TIGR01133">
    <property type="entry name" value="murG"/>
    <property type="match status" value="1"/>
</dbReference>
<dbReference type="PANTHER" id="PTHR21015:SF22">
    <property type="entry name" value="GLYCOSYLTRANSFERASE"/>
    <property type="match status" value="1"/>
</dbReference>
<dbReference type="PANTHER" id="PTHR21015">
    <property type="entry name" value="UDP-N-ACETYLGLUCOSAMINE--N-ACETYLMURAMYL-(PENTAPEPTIDE) PYROPHOSPHORYL-UNDECAPRENOL N-ACETYLGLUCOSAMINE TRANSFERASE 1"/>
    <property type="match status" value="1"/>
</dbReference>
<dbReference type="Pfam" id="PF04101">
    <property type="entry name" value="Glyco_tran_28_C"/>
    <property type="match status" value="1"/>
</dbReference>
<dbReference type="Pfam" id="PF03033">
    <property type="entry name" value="Glyco_transf_28"/>
    <property type="match status" value="1"/>
</dbReference>
<dbReference type="SUPFAM" id="SSF53756">
    <property type="entry name" value="UDP-Glycosyltransferase/glycogen phosphorylase"/>
    <property type="match status" value="1"/>
</dbReference>
<feature type="chain" id="PRO_0000109240" description="UDP-N-acetylglucosamine--N-acetylmuramyl-(pentapeptide) pyrophosphoryl-undecaprenol N-acetylglucosamine transferase">
    <location>
        <begin position="1"/>
        <end position="426"/>
    </location>
</feature>
<feature type="region of interest" description="Disordered" evidence="2">
    <location>
        <begin position="369"/>
        <end position="388"/>
    </location>
</feature>
<feature type="binding site" evidence="1">
    <location>
        <begin position="28"/>
        <end position="30"/>
    </location>
    <ligand>
        <name>UDP-N-acetyl-alpha-D-glucosamine</name>
        <dbReference type="ChEBI" id="CHEBI:57705"/>
    </ligand>
</feature>
<feature type="binding site" evidence="1">
    <location>
        <position position="140"/>
    </location>
    <ligand>
        <name>UDP-N-acetyl-alpha-D-glucosamine</name>
        <dbReference type="ChEBI" id="CHEBI:57705"/>
    </ligand>
</feature>
<feature type="binding site" evidence="1">
    <location>
        <position position="176"/>
    </location>
    <ligand>
        <name>UDP-N-acetyl-alpha-D-glucosamine</name>
        <dbReference type="ChEBI" id="CHEBI:57705"/>
    </ligand>
</feature>
<feature type="binding site" evidence="1">
    <location>
        <position position="204"/>
    </location>
    <ligand>
        <name>UDP-N-acetyl-alpha-D-glucosamine</name>
        <dbReference type="ChEBI" id="CHEBI:57705"/>
    </ligand>
</feature>
<feature type="binding site" evidence="1">
    <location>
        <position position="257"/>
    </location>
    <ligand>
        <name>UDP-N-acetyl-alpha-D-glucosamine</name>
        <dbReference type="ChEBI" id="CHEBI:57705"/>
    </ligand>
</feature>
<feature type="binding site" evidence="1">
    <location>
        <position position="302"/>
    </location>
    <ligand>
        <name>UDP-N-acetyl-alpha-D-glucosamine</name>
        <dbReference type="ChEBI" id="CHEBI:57705"/>
    </ligand>
</feature>
<keyword id="KW-0131">Cell cycle</keyword>
<keyword id="KW-0132">Cell division</keyword>
<keyword id="KW-0997">Cell inner membrane</keyword>
<keyword id="KW-1003">Cell membrane</keyword>
<keyword id="KW-0133">Cell shape</keyword>
<keyword id="KW-0961">Cell wall biogenesis/degradation</keyword>
<keyword id="KW-0328">Glycosyltransferase</keyword>
<keyword id="KW-0472">Membrane</keyword>
<keyword id="KW-0573">Peptidoglycan synthesis</keyword>
<keyword id="KW-0808">Transferase</keyword>
<organism>
    <name type="scientific">Xanthomonas axonopodis pv. citri (strain 306)</name>
    <dbReference type="NCBI Taxonomy" id="190486"/>
    <lineage>
        <taxon>Bacteria</taxon>
        <taxon>Pseudomonadati</taxon>
        <taxon>Pseudomonadota</taxon>
        <taxon>Gammaproteobacteria</taxon>
        <taxon>Lysobacterales</taxon>
        <taxon>Lysobacteraceae</taxon>
        <taxon>Xanthomonas</taxon>
    </lineage>
</organism>
<gene>
    <name evidence="1" type="primary">murG</name>
    <name type="ordered locus">XAC0779</name>
</gene>
<protein>
    <recommendedName>
        <fullName evidence="1">UDP-N-acetylglucosamine--N-acetylmuramyl-(pentapeptide) pyrophosphoryl-undecaprenol N-acetylglucosamine transferase</fullName>
        <ecNumber evidence="1">2.4.1.227</ecNumber>
    </recommendedName>
    <alternativeName>
        <fullName evidence="1">Undecaprenyl-PP-MurNAc-pentapeptide-UDPGlcNAc GlcNAc transferase</fullName>
    </alternativeName>
</protein>
<sequence length="426" mass="44117">MSVSANAAQAHAQPSAVLRPVMILAGGTGGHIFPGLAVAKVLRARGVPVTWLGADGAMETRLVPQHDIPIDTLAISGLRGKGVVKLLGAPVRVMRAVRAAGFVLRKRQPRAVISFGGFAAGPGGLAARLLGAPLLVHEQNRAPGMTNKVLSRFARRVLTGFPGSFVGEEAVGNPVRAEIAALPAPADRLFGRTGPVRVLVLGGSQGARVLNQALPAALVALGHSEVEVRHQCGEKLRAEAEAAYAQAGVNASVEPFIADMAAAYAWADLVVCRAGASTLAELCAAGVGSVLVPFAAAVDDHQTRNAEYLVGANAAVLLKQDDSLPVRLQQVLQTLLADPARRLSMANAARTLAKPDAAERIADIILQEAGNGPSGMGNGHSSEQPQERTLMHADKRTDQVSVAAGAQLHTIPDSRFPIRTSTGGAR</sequence>
<reference key="1">
    <citation type="journal article" date="2002" name="Nature">
        <title>Comparison of the genomes of two Xanthomonas pathogens with differing host specificities.</title>
        <authorList>
            <person name="da Silva A.C.R."/>
            <person name="Ferro J.A."/>
            <person name="Reinach F.C."/>
            <person name="Farah C.S."/>
            <person name="Furlan L.R."/>
            <person name="Quaggio R.B."/>
            <person name="Monteiro-Vitorello C.B."/>
            <person name="Van Sluys M.A."/>
            <person name="Almeida N.F. Jr."/>
            <person name="Alves L.M.C."/>
            <person name="do Amaral A.M."/>
            <person name="Bertolini M.C."/>
            <person name="Camargo L.E.A."/>
            <person name="Camarotte G."/>
            <person name="Cannavan F."/>
            <person name="Cardozo J."/>
            <person name="Chambergo F."/>
            <person name="Ciapina L.P."/>
            <person name="Cicarelli R.M.B."/>
            <person name="Coutinho L.L."/>
            <person name="Cursino-Santos J.R."/>
            <person name="El-Dorry H."/>
            <person name="Faria J.B."/>
            <person name="Ferreira A.J.S."/>
            <person name="Ferreira R.C.C."/>
            <person name="Ferro M.I.T."/>
            <person name="Formighieri E.F."/>
            <person name="Franco M.C."/>
            <person name="Greggio C.C."/>
            <person name="Gruber A."/>
            <person name="Katsuyama A.M."/>
            <person name="Kishi L.T."/>
            <person name="Leite R.P."/>
            <person name="Lemos E.G.M."/>
            <person name="Lemos M.V.F."/>
            <person name="Locali E.C."/>
            <person name="Machado M.A."/>
            <person name="Madeira A.M.B.N."/>
            <person name="Martinez-Rossi N.M."/>
            <person name="Martins E.C."/>
            <person name="Meidanis J."/>
            <person name="Menck C.F.M."/>
            <person name="Miyaki C.Y."/>
            <person name="Moon D.H."/>
            <person name="Moreira L.M."/>
            <person name="Novo M.T.M."/>
            <person name="Okura V.K."/>
            <person name="Oliveira M.C."/>
            <person name="Oliveira V.R."/>
            <person name="Pereira H.A."/>
            <person name="Rossi A."/>
            <person name="Sena J.A.D."/>
            <person name="Silva C."/>
            <person name="de Souza R.F."/>
            <person name="Spinola L.A.F."/>
            <person name="Takita M.A."/>
            <person name="Tamura R.E."/>
            <person name="Teixeira E.C."/>
            <person name="Tezza R.I.D."/>
            <person name="Trindade dos Santos M."/>
            <person name="Truffi D."/>
            <person name="Tsai S.M."/>
            <person name="White F.F."/>
            <person name="Setubal J.C."/>
            <person name="Kitajima J.P."/>
        </authorList>
    </citation>
    <scope>NUCLEOTIDE SEQUENCE [LARGE SCALE GENOMIC DNA]</scope>
    <source>
        <strain>306</strain>
    </source>
</reference>
<proteinExistence type="inferred from homology"/>
<comment type="function">
    <text evidence="1">Cell wall formation. Catalyzes the transfer of a GlcNAc subunit on undecaprenyl-pyrophosphoryl-MurNAc-pentapeptide (lipid intermediate I) to form undecaprenyl-pyrophosphoryl-MurNAc-(pentapeptide)GlcNAc (lipid intermediate II).</text>
</comment>
<comment type="catalytic activity">
    <reaction evidence="1">
        <text>di-trans,octa-cis-undecaprenyl diphospho-N-acetyl-alpha-D-muramoyl-L-alanyl-D-glutamyl-meso-2,6-diaminopimeloyl-D-alanyl-D-alanine + UDP-N-acetyl-alpha-D-glucosamine = di-trans,octa-cis-undecaprenyl diphospho-[N-acetyl-alpha-D-glucosaminyl-(1-&gt;4)]-N-acetyl-alpha-D-muramoyl-L-alanyl-D-glutamyl-meso-2,6-diaminopimeloyl-D-alanyl-D-alanine + UDP + H(+)</text>
        <dbReference type="Rhea" id="RHEA:31227"/>
        <dbReference type="ChEBI" id="CHEBI:15378"/>
        <dbReference type="ChEBI" id="CHEBI:57705"/>
        <dbReference type="ChEBI" id="CHEBI:58223"/>
        <dbReference type="ChEBI" id="CHEBI:61387"/>
        <dbReference type="ChEBI" id="CHEBI:61388"/>
        <dbReference type="EC" id="2.4.1.227"/>
    </reaction>
</comment>
<comment type="pathway">
    <text evidence="1">Cell wall biogenesis; peptidoglycan biosynthesis.</text>
</comment>
<comment type="subcellular location">
    <subcellularLocation>
        <location evidence="1">Cell inner membrane</location>
        <topology evidence="1">Peripheral membrane protein</topology>
        <orientation evidence="1">Cytoplasmic side</orientation>
    </subcellularLocation>
</comment>
<comment type="similarity">
    <text evidence="1">Belongs to the glycosyltransferase 28 family. MurG subfamily.</text>
</comment>
<name>MURG_XANAC</name>
<accession>Q8PPA8</accession>